<dbReference type="EMBL" id="AE016877">
    <property type="protein sequence ID" value="AAP10331.1"/>
    <property type="molecule type" value="Genomic_DNA"/>
</dbReference>
<dbReference type="RefSeq" id="NP_833130.1">
    <property type="nucleotide sequence ID" value="NC_004722.1"/>
</dbReference>
<dbReference type="SMR" id="Q81B01"/>
<dbReference type="STRING" id="226900.BC_3395"/>
<dbReference type="KEGG" id="bce:BC3395"/>
<dbReference type="PATRIC" id="fig|226900.8.peg.3482"/>
<dbReference type="HOGENOM" id="CLU_101036_2_0_9"/>
<dbReference type="Proteomes" id="UP000001417">
    <property type="component" value="Chromosome"/>
</dbReference>
<dbReference type="FunFam" id="3.30.450.150:FF:000002">
    <property type="entry name" value="UPF0303 protein BCAH820_3413"/>
    <property type="match status" value="1"/>
</dbReference>
<dbReference type="Gene3D" id="3.30.450.150">
    <property type="entry name" value="Haem-degrading domain"/>
    <property type="match status" value="1"/>
</dbReference>
<dbReference type="HAMAP" id="MF_00761">
    <property type="entry name" value="UPF0303"/>
    <property type="match status" value="1"/>
</dbReference>
<dbReference type="InterPro" id="IPR005624">
    <property type="entry name" value="PduO/GlcC-like"/>
</dbReference>
<dbReference type="InterPro" id="IPR038084">
    <property type="entry name" value="PduO/GlcC-like_sf"/>
</dbReference>
<dbReference type="InterPro" id="IPR010371">
    <property type="entry name" value="YBR137W-like"/>
</dbReference>
<dbReference type="NCBIfam" id="NF002692">
    <property type="entry name" value="PRK02487.1-1"/>
    <property type="match status" value="1"/>
</dbReference>
<dbReference type="NCBIfam" id="NF002696">
    <property type="entry name" value="PRK02487.1-5"/>
    <property type="match status" value="1"/>
</dbReference>
<dbReference type="PANTHER" id="PTHR28255">
    <property type="match status" value="1"/>
</dbReference>
<dbReference type="PANTHER" id="PTHR28255:SF1">
    <property type="entry name" value="UPF0303 PROTEIN YBR137W"/>
    <property type="match status" value="1"/>
</dbReference>
<dbReference type="Pfam" id="PF03928">
    <property type="entry name" value="HbpS-like"/>
    <property type="match status" value="1"/>
</dbReference>
<dbReference type="PIRSF" id="PIRSF008757">
    <property type="entry name" value="UCP008757"/>
    <property type="match status" value="1"/>
</dbReference>
<dbReference type="SUPFAM" id="SSF143744">
    <property type="entry name" value="GlcG-like"/>
    <property type="match status" value="1"/>
</dbReference>
<comment type="similarity">
    <text evidence="1">Belongs to the UPF0303 family.</text>
</comment>
<sequence length="158" mass="17914">MSTSNLNEISKQILKEEETLQFSSFTNEDALQLGLFIVETAKREGKLIAVDITKNGVQLFHFKMTGTNAENTKWIERKKRVVSLHDRSSYYMQIQSEITGISYNEKYLLDTSEYAAFGGCFPIRIKNVGVIGMITVSGLPPEEDHELVVRAVKNHLNQ</sequence>
<proteinExistence type="inferred from homology"/>
<reference key="1">
    <citation type="journal article" date="2003" name="Nature">
        <title>Genome sequence of Bacillus cereus and comparative analysis with Bacillus anthracis.</title>
        <authorList>
            <person name="Ivanova N."/>
            <person name="Sorokin A."/>
            <person name="Anderson I."/>
            <person name="Galleron N."/>
            <person name="Candelon B."/>
            <person name="Kapatral V."/>
            <person name="Bhattacharyya A."/>
            <person name="Reznik G."/>
            <person name="Mikhailova N."/>
            <person name="Lapidus A."/>
            <person name="Chu L."/>
            <person name="Mazur M."/>
            <person name="Goltsman E."/>
            <person name="Larsen N."/>
            <person name="D'Souza M."/>
            <person name="Walunas T."/>
            <person name="Grechkin Y."/>
            <person name="Pusch G."/>
            <person name="Haselkorn R."/>
            <person name="Fonstein M."/>
            <person name="Ehrlich S.D."/>
            <person name="Overbeek R."/>
            <person name="Kyrpides N.C."/>
        </authorList>
    </citation>
    <scope>NUCLEOTIDE SEQUENCE [LARGE SCALE GENOMIC DNA]</scope>
    <source>
        <strain>ATCC 14579 / DSM 31 / CCUG 7414 / JCM 2152 / NBRC 15305 / NCIMB 9373 / NCTC 2599 / NRRL B-3711</strain>
    </source>
</reference>
<gene>
    <name type="ordered locus">BC_3395</name>
</gene>
<name>Y3395_BACCR</name>
<accession>Q81B01</accession>
<feature type="chain" id="PRO_0000208914" description="UPF0303 protein BC_3395">
    <location>
        <begin position="1"/>
        <end position="158"/>
    </location>
</feature>
<protein>
    <recommendedName>
        <fullName evidence="1">UPF0303 protein BC_3395</fullName>
    </recommendedName>
</protein>
<evidence type="ECO:0000255" key="1">
    <source>
        <dbReference type="HAMAP-Rule" id="MF_00761"/>
    </source>
</evidence>
<organism>
    <name type="scientific">Bacillus cereus (strain ATCC 14579 / DSM 31 / CCUG 7414 / JCM 2152 / NBRC 15305 / NCIMB 9373 / NCTC 2599 / NRRL B-3711)</name>
    <dbReference type="NCBI Taxonomy" id="226900"/>
    <lineage>
        <taxon>Bacteria</taxon>
        <taxon>Bacillati</taxon>
        <taxon>Bacillota</taxon>
        <taxon>Bacilli</taxon>
        <taxon>Bacillales</taxon>
        <taxon>Bacillaceae</taxon>
        <taxon>Bacillus</taxon>
        <taxon>Bacillus cereus group</taxon>
    </lineage>
</organism>
<keyword id="KW-1185">Reference proteome</keyword>